<organism>
    <name type="scientific">Phaeodactylum tricornutum (strain CCAP 1055/1)</name>
    <dbReference type="NCBI Taxonomy" id="556484"/>
    <lineage>
        <taxon>Eukaryota</taxon>
        <taxon>Sar</taxon>
        <taxon>Stramenopiles</taxon>
        <taxon>Ochrophyta</taxon>
        <taxon>Bacillariophyta</taxon>
        <taxon>Bacillariophyceae</taxon>
        <taxon>Bacillariophycidae</taxon>
        <taxon>Naviculales</taxon>
        <taxon>Phaeodactylaceae</taxon>
        <taxon>Phaeodactylum</taxon>
    </lineage>
</organism>
<dbReference type="EMBL" id="EF067920">
    <property type="protein sequence ID" value="ABK20688.1"/>
    <property type="molecule type" value="Genomic_DNA"/>
</dbReference>
<dbReference type="RefSeq" id="YP_874465.1">
    <property type="nucleotide sequence ID" value="NC_008588.1"/>
</dbReference>
<dbReference type="SMR" id="A0T0J0"/>
<dbReference type="STRING" id="556484.A0T0J0"/>
<dbReference type="GeneID" id="4524667"/>
<dbReference type="InParanoid" id="A0T0J0"/>
<dbReference type="Proteomes" id="UP000000759">
    <property type="component" value="Chloroplast"/>
</dbReference>
<dbReference type="GO" id="GO:0009507">
    <property type="term" value="C:chloroplast"/>
    <property type="evidence" value="ECO:0007669"/>
    <property type="project" value="UniProtKB-SubCell"/>
</dbReference>
<dbReference type="GO" id="GO:1990904">
    <property type="term" value="C:ribonucleoprotein complex"/>
    <property type="evidence" value="ECO:0007669"/>
    <property type="project" value="UniProtKB-KW"/>
</dbReference>
<dbReference type="GO" id="GO:0005840">
    <property type="term" value="C:ribosome"/>
    <property type="evidence" value="ECO:0007669"/>
    <property type="project" value="UniProtKB-KW"/>
</dbReference>
<dbReference type="GO" id="GO:0019843">
    <property type="term" value="F:rRNA binding"/>
    <property type="evidence" value="ECO:0007669"/>
    <property type="project" value="UniProtKB-UniRule"/>
</dbReference>
<dbReference type="GO" id="GO:0003735">
    <property type="term" value="F:structural constituent of ribosome"/>
    <property type="evidence" value="ECO:0007669"/>
    <property type="project" value="InterPro"/>
</dbReference>
<dbReference type="GO" id="GO:0006412">
    <property type="term" value="P:translation"/>
    <property type="evidence" value="ECO:0007669"/>
    <property type="project" value="UniProtKB-UniRule"/>
</dbReference>
<dbReference type="CDD" id="cd06089">
    <property type="entry name" value="KOW_RPL26"/>
    <property type="match status" value="1"/>
</dbReference>
<dbReference type="Gene3D" id="2.30.30.30">
    <property type="match status" value="1"/>
</dbReference>
<dbReference type="HAMAP" id="MF_01326_B">
    <property type="entry name" value="Ribosomal_uL24_B"/>
    <property type="match status" value="1"/>
</dbReference>
<dbReference type="InterPro" id="IPR005824">
    <property type="entry name" value="KOW"/>
</dbReference>
<dbReference type="InterPro" id="IPR014722">
    <property type="entry name" value="Rib_uL2_dom2"/>
</dbReference>
<dbReference type="InterPro" id="IPR003256">
    <property type="entry name" value="Ribosomal_uL24"/>
</dbReference>
<dbReference type="InterPro" id="IPR005825">
    <property type="entry name" value="Ribosomal_uL24_CS"/>
</dbReference>
<dbReference type="InterPro" id="IPR041988">
    <property type="entry name" value="Ribosomal_uL24_KOW"/>
</dbReference>
<dbReference type="InterPro" id="IPR008991">
    <property type="entry name" value="Translation_prot_SH3-like_sf"/>
</dbReference>
<dbReference type="NCBIfam" id="TIGR01079">
    <property type="entry name" value="rplX_bact"/>
    <property type="match status" value="1"/>
</dbReference>
<dbReference type="PANTHER" id="PTHR12903">
    <property type="entry name" value="MITOCHONDRIAL RIBOSOMAL PROTEIN L24"/>
    <property type="match status" value="1"/>
</dbReference>
<dbReference type="Pfam" id="PF00467">
    <property type="entry name" value="KOW"/>
    <property type="match status" value="1"/>
</dbReference>
<dbReference type="Pfam" id="PF17136">
    <property type="entry name" value="ribosomal_L24"/>
    <property type="match status" value="1"/>
</dbReference>
<dbReference type="SMART" id="SM00739">
    <property type="entry name" value="KOW"/>
    <property type="match status" value="1"/>
</dbReference>
<dbReference type="SUPFAM" id="SSF50104">
    <property type="entry name" value="Translation proteins SH3-like domain"/>
    <property type="match status" value="1"/>
</dbReference>
<dbReference type="PROSITE" id="PS01108">
    <property type="entry name" value="RIBOSOMAL_L24"/>
    <property type="match status" value="1"/>
</dbReference>
<protein>
    <recommendedName>
        <fullName evidence="2">Large ribosomal subunit protein uL24c</fullName>
    </recommendedName>
    <alternativeName>
        <fullName>50S ribosomal protein L24, chloroplastic</fullName>
    </alternativeName>
</protein>
<keyword id="KW-0150">Chloroplast</keyword>
<keyword id="KW-0934">Plastid</keyword>
<keyword id="KW-1185">Reference proteome</keyword>
<keyword id="KW-0687">Ribonucleoprotein</keyword>
<keyword id="KW-0689">Ribosomal protein</keyword>
<keyword id="KW-0694">RNA-binding</keyword>
<keyword id="KW-0699">rRNA-binding</keyword>
<feature type="chain" id="PRO_0000276453" description="Large ribosomal subunit protein uL24c">
    <location>
        <begin position="1"/>
        <end position="82"/>
    </location>
</feature>
<name>RK24_PHATC</name>
<sequence length="82" mass="9286">MPQKQKVNVKIGDSVTVISGFHKNETGEVLKINRKNGKIIVKGINFKFKHVKPTTENEIGEIKQFEAPLHHSNVKLNLKKVL</sequence>
<evidence type="ECO:0000250" key="1"/>
<evidence type="ECO:0000305" key="2"/>
<geneLocation type="chloroplast"/>
<gene>
    <name type="primary">rpl24</name>
</gene>
<reference key="1">
    <citation type="journal article" date="2007" name="Mol. Genet. Genomics">
        <title>Chloroplast genomes of the diatoms Phaeodactylum tricornutum and Thalassiosira pseudonana: comparison with other plastid genomes of the red lineage.</title>
        <authorList>
            <person name="Oudot-Le Secq M.-P."/>
            <person name="Grimwood J."/>
            <person name="Shapiro H."/>
            <person name="Armbrust E.V."/>
            <person name="Bowler C."/>
            <person name="Green B.R."/>
        </authorList>
    </citation>
    <scope>NUCLEOTIDE SEQUENCE [LARGE SCALE GENOMIC DNA]</scope>
    <source>
        <strain>CCAP 1055/1</strain>
    </source>
</reference>
<accession>A0T0J0</accession>
<comment type="function">
    <text evidence="1">One of two assembly initiator proteins, it binds directly to the 5'-end of the 23S rRNA, where it nucleates assembly of the 50S subunit.</text>
</comment>
<comment type="subunit">
    <text evidence="1">Part of the 50S ribosomal subunit.</text>
</comment>
<comment type="subcellular location">
    <subcellularLocation>
        <location>Plastid</location>
        <location>Chloroplast</location>
    </subcellularLocation>
</comment>
<comment type="similarity">
    <text evidence="2">Belongs to the universal ribosomal protein uL24 family.</text>
</comment>
<proteinExistence type="inferred from homology"/>